<comment type="catalytic activity">
    <reaction evidence="1">
        <text>1-(5-phospho-beta-D-ribosyl)-5-[(5-phospho-beta-D-ribosylamino)methylideneamino]imidazole-4-carboxamide = 5-[(5-phospho-1-deoxy-D-ribulos-1-ylimino)methylamino]-1-(5-phospho-beta-D-ribosyl)imidazole-4-carboxamide</text>
        <dbReference type="Rhea" id="RHEA:15469"/>
        <dbReference type="ChEBI" id="CHEBI:58435"/>
        <dbReference type="ChEBI" id="CHEBI:58525"/>
        <dbReference type="EC" id="5.3.1.16"/>
    </reaction>
</comment>
<comment type="pathway">
    <text evidence="1">Amino-acid biosynthesis; L-histidine biosynthesis; L-histidine from 5-phospho-alpha-D-ribose 1-diphosphate: step 4/9.</text>
</comment>
<comment type="subcellular location">
    <subcellularLocation>
        <location evidence="1">Cytoplasm</location>
    </subcellularLocation>
</comment>
<comment type="similarity">
    <text evidence="1">Belongs to the HisA/HisF family.</text>
</comment>
<proteinExistence type="inferred from homology"/>
<gene>
    <name evidence="1" type="primary">hisA</name>
    <name type="ordered locus">Dtur_1125</name>
</gene>
<sequence>MLIIPAIDIYKSKVVRMETGKKEKIILEFDNPIDLAKYWEKKGAKALHLIDLQSAIDGIDENKNIIREIIKNVSIPVEVGGGYRDKEKIEEAINWGVWRVIVSSILEKDLGYLSDLFSKYKEKIIPSIDWYDGRVGIKGWQDFVEWRNIKDKLDLLRVKEVIFTDISRDGTLRGINVENIKTFLRLHDYDIWIAGGISSIEDIIKIKNIWKETERIKGVIIGRALLEGRINWEEAEDIINAG</sequence>
<keyword id="KW-0028">Amino-acid biosynthesis</keyword>
<keyword id="KW-0963">Cytoplasm</keyword>
<keyword id="KW-0368">Histidine biosynthesis</keyword>
<keyword id="KW-0413">Isomerase</keyword>
<keyword id="KW-1185">Reference proteome</keyword>
<feature type="chain" id="PRO_1000135107" description="1-(5-phosphoribosyl)-5-[(5-phosphoribosylamino)methylideneamino] imidazole-4-carboxamide isomerase">
    <location>
        <begin position="1"/>
        <end position="242"/>
    </location>
</feature>
<feature type="active site" description="Proton acceptor" evidence="1">
    <location>
        <position position="8"/>
    </location>
</feature>
<feature type="active site" description="Proton donor" evidence="1">
    <location>
        <position position="129"/>
    </location>
</feature>
<organism>
    <name type="scientific">Dictyoglomus turgidum (strain DSM 6724 / Z-1310)</name>
    <dbReference type="NCBI Taxonomy" id="515635"/>
    <lineage>
        <taxon>Bacteria</taxon>
        <taxon>Pseudomonadati</taxon>
        <taxon>Dictyoglomota</taxon>
        <taxon>Dictyoglomia</taxon>
        <taxon>Dictyoglomales</taxon>
        <taxon>Dictyoglomaceae</taxon>
        <taxon>Dictyoglomus</taxon>
    </lineage>
</organism>
<dbReference type="EC" id="5.3.1.16" evidence="1"/>
<dbReference type="EMBL" id="CP001251">
    <property type="protein sequence ID" value="ACK42404.1"/>
    <property type="molecule type" value="Genomic_DNA"/>
</dbReference>
<dbReference type="RefSeq" id="WP_012583487.1">
    <property type="nucleotide sequence ID" value="NC_011661.1"/>
</dbReference>
<dbReference type="RefSeq" id="YP_002353018.1">
    <property type="nucleotide sequence ID" value="NC_011661.1"/>
</dbReference>
<dbReference type="SMR" id="B8E2C7"/>
<dbReference type="FunCoup" id="B8E2C7">
    <property type="interactions" value="282"/>
</dbReference>
<dbReference type="STRING" id="515635.Dtur_1125"/>
<dbReference type="EnsemblBacteria" id="ACK42404">
    <property type="protein sequence ID" value="ACK42404"/>
    <property type="gene ID" value="Dtur_1125"/>
</dbReference>
<dbReference type="KEGG" id="dtu:Dtur_1125"/>
<dbReference type="PATRIC" id="fig|515635.4.peg.1162"/>
<dbReference type="eggNOG" id="COG0106">
    <property type="taxonomic scope" value="Bacteria"/>
</dbReference>
<dbReference type="HOGENOM" id="CLU_048577_1_1_0"/>
<dbReference type="InParanoid" id="B8E2C7"/>
<dbReference type="OrthoDB" id="9807749at2"/>
<dbReference type="UniPathway" id="UPA00031">
    <property type="reaction ID" value="UER00009"/>
</dbReference>
<dbReference type="Proteomes" id="UP000007719">
    <property type="component" value="Chromosome"/>
</dbReference>
<dbReference type="GO" id="GO:0005737">
    <property type="term" value="C:cytoplasm"/>
    <property type="evidence" value="ECO:0000318"/>
    <property type="project" value="GO_Central"/>
</dbReference>
<dbReference type="GO" id="GO:0003949">
    <property type="term" value="F:1-(5-phosphoribosyl)-5-[(5-phosphoribosylamino)methylideneamino]imidazole-4-carboxamide isomerase activity"/>
    <property type="evidence" value="ECO:0000318"/>
    <property type="project" value="GO_Central"/>
</dbReference>
<dbReference type="GO" id="GO:0000105">
    <property type="term" value="P:L-histidine biosynthetic process"/>
    <property type="evidence" value="ECO:0000318"/>
    <property type="project" value="GO_Central"/>
</dbReference>
<dbReference type="CDD" id="cd04732">
    <property type="entry name" value="HisA"/>
    <property type="match status" value="1"/>
</dbReference>
<dbReference type="FunFam" id="3.20.20.70:FF:000009">
    <property type="entry name" value="1-(5-phosphoribosyl)-5-[(5-phosphoribosylamino)methylideneamino] imidazole-4-carboxamide isomerase"/>
    <property type="match status" value="1"/>
</dbReference>
<dbReference type="Gene3D" id="3.20.20.70">
    <property type="entry name" value="Aldolase class I"/>
    <property type="match status" value="1"/>
</dbReference>
<dbReference type="HAMAP" id="MF_01014">
    <property type="entry name" value="HisA"/>
    <property type="match status" value="1"/>
</dbReference>
<dbReference type="InterPro" id="IPR013785">
    <property type="entry name" value="Aldolase_TIM"/>
</dbReference>
<dbReference type="InterPro" id="IPR006062">
    <property type="entry name" value="His_biosynth"/>
</dbReference>
<dbReference type="InterPro" id="IPR044524">
    <property type="entry name" value="Isoase_HisA-like"/>
</dbReference>
<dbReference type="InterPro" id="IPR023016">
    <property type="entry name" value="Isoase_HisA-like_bact"/>
</dbReference>
<dbReference type="InterPro" id="IPR011060">
    <property type="entry name" value="RibuloseP-bd_barrel"/>
</dbReference>
<dbReference type="PANTHER" id="PTHR43090">
    <property type="entry name" value="1-(5-PHOSPHORIBOSYL)-5-[(5-PHOSPHORIBOSYLAMINO)METHYLIDENEAMINO] IMIDAZOLE-4-CARBOXAMIDE ISOMERASE"/>
    <property type="match status" value="1"/>
</dbReference>
<dbReference type="PANTHER" id="PTHR43090:SF2">
    <property type="entry name" value="1-(5-PHOSPHORIBOSYL)-5-[(5-PHOSPHORIBOSYLAMINO)METHYLIDENEAMINO] IMIDAZOLE-4-CARBOXAMIDE ISOMERASE"/>
    <property type="match status" value="1"/>
</dbReference>
<dbReference type="Pfam" id="PF00977">
    <property type="entry name" value="His_biosynth"/>
    <property type="match status" value="1"/>
</dbReference>
<dbReference type="SUPFAM" id="SSF51366">
    <property type="entry name" value="Ribulose-phoshate binding barrel"/>
    <property type="match status" value="1"/>
</dbReference>
<reference key="1">
    <citation type="journal article" date="2016" name="Front. Microbiol.">
        <title>The complete genome sequence of hyperthermophile Dictyoglomus turgidum DSM 6724 reveals a specialized carbohydrate fermentor.</title>
        <authorList>
            <person name="Brumm P.J."/>
            <person name="Gowda K."/>
            <person name="Robb F.T."/>
            <person name="Mead D.A."/>
        </authorList>
    </citation>
    <scope>NUCLEOTIDE SEQUENCE [LARGE SCALE GENOMIC DNA]</scope>
    <source>
        <strain>DSM 6724 / Z-1310</strain>
    </source>
</reference>
<evidence type="ECO:0000255" key="1">
    <source>
        <dbReference type="HAMAP-Rule" id="MF_01014"/>
    </source>
</evidence>
<protein>
    <recommendedName>
        <fullName evidence="1">1-(5-phosphoribosyl)-5-[(5-phosphoribosylamino)methylideneamino] imidazole-4-carboxamide isomerase</fullName>
        <ecNumber evidence="1">5.3.1.16</ecNumber>
    </recommendedName>
    <alternativeName>
        <fullName evidence="1">Phosphoribosylformimino-5-aminoimidazole carboxamide ribotide isomerase</fullName>
    </alternativeName>
</protein>
<accession>B8E2C7</accession>
<name>HIS4_DICTD</name>